<proteinExistence type="inferred from homology"/>
<feature type="chain" id="PRO_1000132804" description="ATP-dependent Clp protease adapter protein ClpS">
    <location>
        <begin position="1"/>
        <end position="109"/>
    </location>
</feature>
<feature type="region of interest" description="Disordered" evidence="2">
    <location>
        <begin position="1"/>
        <end position="20"/>
    </location>
</feature>
<gene>
    <name evidence="1" type="primary">clpS</name>
    <name type="ordered locus">CCNA_02552</name>
</gene>
<reference key="1">
    <citation type="journal article" date="2010" name="J. Bacteriol.">
        <title>The genetic basis of laboratory adaptation in Caulobacter crescentus.</title>
        <authorList>
            <person name="Marks M.E."/>
            <person name="Castro-Rojas C.M."/>
            <person name="Teiling C."/>
            <person name="Du L."/>
            <person name="Kapatral V."/>
            <person name="Walunas T.L."/>
            <person name="Crosson S."/>
        </authorList>
    </citation>
    <scope>NUCLEOTIDE SEQUENCE [LARGE SCALE GENOMIC DNA]</scope>
    <source>
        <strain>NA1000 / CB15N</strain>
    </source>
</reference>
<organism>
    <name type="scientific">Caulobacter vibrioides (strain NA1000 / CB15N)</name>
    <name type="common">Caulobacter crescentus</name>
    <dbReference type="NCBI Taxonomy" id="565050"/>
    <lineage>
        <taxon>Bacteria</taxon>
        <taxon>Pseudomonadati</taxon>
        <taxon>Pseudomonadota</taxon>
        <taxon>Alphaproteobacteria</taxon>
        <taxon>Caulobacterales</taxon>
        <taxon>Caulobacteraceae</taxon>
        <taxon>Caulobacter</taxon>
    </lineage>
</organism>
<accession>B8GZM8</accession>
<keyword id="KW-1185">Reference proteome</keyword>
<sequence length="109" mass="12356">MAERKQGGQGNGVGSSVVTEVKPKTQKPSLYRVLILNDDYTPMEFVVYVLERFFNKSREDATRIMLHVHQNGVGVCGVYTYEVAETKVAQVIDSARRHQHPLQCTMEKD</sequence>
<name>CLPS_CAUVN</name>
<protein>
    <recommendedName>
        <fullName evidence="1">ATP-dependent Clp protease adapter protein ClpS</fullName>
    </recommendedName>
</protein>
<comment type="function">
    <text evidence="1">Involved in the modulation of the specificity of the ClpAP-mediated ATP-dependent protein degradation.</text>
</comment>
<comment type="subunit">
    <text evidence="1">Binds to the N-terminal domain of the chaperone ClpA.</text>
</comment>
<comment type="similarity">
    <text evidence="1">Belongs to the ClpS family.</text>
</comment>
<dbReference type="EMBL" id="CP001340">
    <property type="protein sequence ID" value="ACL96017.1"/>
    <property type="molecule type" value="Genomic_DNA"/>
</dbReference>
<dbReference type="RefSeq" id="WP_012640501.1">
    <property type="nucleotide sequence ID" value="NC_011916.1"/>
</dbReference>
<dbReference type="RefSeq" id="YP_002517925.1">
    <property type="nucleotide sequence ID" value="NC_011916.1"/>
</dbReference>
<dbReference type="SMR" id="B8GZM8"/>
<dbReference type="GeneID" id="7332902"/>
<dbReference type="KEGG" id="ccs:CCNA_02552"/>
<dbReference type="PATRIC" id="fig|565050.3.peg.2502"/>
<dbReference type="HOGENOM" id="CLU_134358_2_1_5"/>
<dbReference type="OrthoDB" id="9796121at2"/>
<dbReference type="PhylomeDB" id="B8GZM8"/>
<dbReference type="Proteomes" id="UP000001364">
    <property type="component" value="Chromosome"/>
</dbReference>
<dbReference type="GO" id="GO:0030163">
    <property type="term" value="P:protein catabolic process"/>
    <property type="evidence" value="ECO:0007669"/>
    <property type="project" value="InterPro"/>
</dbReference>
<dbReference type="GO" id="GO:0006508">
    <property type="term" value="P:proteolysis"/>
    <property type="evidence" value="ECO:0007669"/>
    <property type="project" value="UniProtKB-UniRule"/>
</dbReference>
<dbReference type="FunFam" id="3.30.1390.10:FF:000002">
    <property type="entry name" value="ATP-dependent Clp protease adapter protein ClpS"/>
    <property type="match status" value="1"/>
</dbReference>
<dbReference type="Gene3D" id="3.30.1390.10">
    <property type="match status" value="1"/>
</dbReference>
<dbReference type="HAMAP" id="MF_00302">
    <property type="entry name" value="ClpS"/>
    <property type="match status" value="1"/>
</dbReference>
<dbReference type="InterPro" id="IPR022935">
    <property type="entry name" value="ClpS"/>
</dbReference>
<dbReference type="InterPro" id="IPR003769">
    <property type="entry name" value="ClpS_core"/>
</dbReference>
<dbReference type="InterPro" id="IPR014719">
    <property type="entry name" value="Ribosomal_bL12_C/ClpS-like"/>
</dbReference>
<dbReference type="NCBIfam" id="NF000669">
    <property type="entry name" value="PRK00033.1-2"/>
    <property type="match status" value="1"/>
</dbReference>
<dbReference type="NCBIfam" id="NF000672">
    <property type="entry name" value="PRK00033.1-5"/>
    <property type="match status" value="1"/>
</dbReference>
<dbReference type="PANTHER" id="PTHR33473:SF19">
    <property type="entry name" value="ATP-DEPENDENT CLP PROTEASE ADAPTER PROTEIN CLPS"/>
    <property type="match status" value="1"/>
</dbReference>
<dbReference type="PANTHER" id="PTHR33473">
    <property type="entry name" value="ATP-DEPENDENT CLP PROTEASE ADAPTER PROTEIN CLPS1, CHLOROPLASTIC"/>
    <property type="match status" value="1"/>
</dbReference>
<dbReference type="Pfam" id="PF02617">
    <property type="entry name" value="ClpS"/>
    <property type="match status" value="1"/>
</dbReference>
<dbReference type="SUPFAM" id="SSF54736">
    <property type="entry name" value="ClpS-like"/>
    <property type="match status" value="1"/>
</dbReference>
<evidence type="ECO:0000255" key="1">
    <source>
        <dbReference type="HAMAP-Rule" id="MF_00302"/>
    </source>
</evidence>
<evidence type="ECO:0000256" key="2">
    <source>
        <dbReference type="SAM" id="MobiDB-lite"/>
    </source>
</evidence>